<accession>C5GVJ9</accession>
<reference key="1">
    <citation type="journal article" date="2015" name="PLoS Genet.">
        <title>The dynamic genome and transcriptome of the human fungal pathogen Blastomyces and close relative Emmonsia.</title>
        <authorList>
            <person name="Munoz J.F."/>
            <person name="Gauthier G.M."/>
            <person name="Desjardins C.A."/>
            <person name="Gallo J.E."/>
            <person name="Holder J."/>
            <person name="Sullivan T.D."/>
            <person name="Marty A.J."/>
            <person name="Carmen J.C."/>
            <person name="Chen Z."/>
            <person name="Ding L."/>
            <person name="Gujja S."/>
            <person name="Magrini V."/>
            <person name="Misas E."/>
            <person name="Mitreva M."/>
            <person name="Priest M."/>
            <person name="Saif S."/>
            <person name="Whiston E.A."/>
            <person name="Young S."/>
            <person name="Zeng Q."/>
            <person name="Goldman W.E."/>
            <person name="Mardis E.R."/>
            <person name="Taylor J.W."/>
            <person name="McEwen J.G."/>
            <person name="Clay O.K."/>
            <person name="Klein B.S."/>
            <person name="Cuomo C.A."/>
        </authorList>
    </citation>
    <scope>NUCLEOTIDE SEQUENCE [LARGE SCALE GENOMIC DNA]</scope>
    <source>
        <strain>ER-3 / ATCC MYA-2586</strain>
    </source>
</reference>
<keyword id="KW-0131">Cell cycle</keyword>
<keyword id="KW-0132">Cell division</keyword>
<keyword id="KW-0175">Coiled coil</keyword>
<keyword id="KW-0963">Cytoplasm</keyword>
<keyword id="KW-0206">Cytoskeleton</keyword>
<keyword id="KW-0493">Microtubule</keyword>
<keyword id="KW-0498">Mitosis</keyword>
<keyword id="KW-0677">Repeat</keyword>
<keyword id="KW-0813">Transport</keyword>
<keyword id="KW-0853">WD repeat</keyword>
<sequence>MSQLLTPRQAEELHKSIIAYFLSAKLPKSAAALREEIADSVQLDDSTAKKYEGLLEKKWTSVVRLQKKIMDLEARNSALQSELDSATPTSLSRRNQDPVSWLPRAPARHRLESHRNPVTSVAFHPVFSSLASGSEDTTIKIWDWELGELERTIKGHTRAVVDVDYGGPHGGTLLASCSSDLTIKLWDPSDEYKNIRTLPGHDHSVSAVRFIPSGAAGSPLSGNLLVSASRDKTLRIWDVTTGYCVRTLHGHVEWVRDVVPSPDGRFLFSAGDDRVARLWDVSSGETKSTFLGHEHFIECVALAPPTTYPYLAALAGLKKPPPPSSSAEYVATGSRDKTIRVWDSRGTLIKTLIGHDNWVRALVFHPGGKYLLSVSDDKTIRCWDLSQEFKCVRVVTDAHAFVTCIRWAPNIIKDAGGMGVNGDINGGGSLALSGVNGIIPGSKKEDPGGGAKLGIRCVIATGSVDLNVRVFAS</sequence>
<gene>
    <name evidence="1" type="primary">PAC1</name>
    <name evidence="1" type="synonym">LIS1</name>
    <name type="ORF">BDCG_08409</name>
</gene>
<evidence type="ECO:0000255" key="1">
    <source>
        <dbReference type="HAMAP-Rule" id="MF_03141"/>
    </source>
</evidence>
<evidence type="ECO:0000256" key="2">
    <source>
        <dbReference type="SAM" id="MobiDB-lite"/>
    </source>
</evidence>
<name>LIS1_AJEDR</name>
<protein>
    <recommendedName>
        <fullName evidence="1">Nuclear distribution protein PAC1</fullName>
    </recommendedName>
    <alternativeName>
        <fullName evidence="1">Lissencephaly-1 homolog</fullName>
        <shortName evidence="1">LIS-1</shortName>
    </alternativeName>
    <alternativeName>
        <fullName evidence="1">nudF homolog</fullName>
    </alternativeName>
</protein>
<feature type="chain" id="PRO_0000405062" description="Nuclear distribution protein PAC1">
    <location>
        <begin position="1"/>
        <end position="473"/>
    </location>
</feature>
<feature type="domain" description="LisH" evidence="1">
    <location>
        <begin position="9"/>
        <end position="41"/>
    </location>
</feature>
<feature type="repeat" description="WD 1">
    <location>
        <begin position="113"/>
        <end position="154"/>
    </location>
</feature>
<feature type="repeat" description="WD 2">
    <location>
        <begin position="156"/>
        <end position="196"/>
    </location>
</feature>
<feature type="repeat" description="WD 3">
    <location>
        <begin position="200"/>
        <end position="247"/>
    </location>
</feature>
<feature type="repeat" description="WD 4">
    <location>
        <begin position="250"/>
        <end position="289"/>
    </location>
</feature>
<feature type="repeat" description="WD 5">
    <location>
        <begin position="292"/>
        <end position="352"/>
    </location>
</feature>
<feature type="repeat" description="WD 6">
    <location>
        <begin position="354"/>
        <end position="393"/>
    </location>
</feature>
<feature type="repeat" description="WD 7">
    <location>
        <begin position="397"/>
        <end position="434"/>
    </location>
</feature>
<feature type="repeat" description="WD 8">
    <location>
        <begin position="435"/>
        <end position="472"/>
    </location>
</feature>
<feature type="region of interest" description="Disordered" evidence="2">
    <location>
        <begin position="80"/>
        <end position="99"/>
    </location>
</feature>
<feature type="coiled-coil region" evidence="1">
    <location>
        <begin position="60"/>
        <end position="87"/>
    </location>
</feature>
<feature type="compositionally biased region" description="Polar residues" evidence="2">
    <location>
        <begin position="80"/>
        <end position="93"/>
    </location>
</feature>
<dbReference type="EMBL" id="EQ999983">
    <property type="protein sequence ID" value="EEQ85140.1"/>
    <property type="molecule type" value="Genomic_DNA"/>
</dbReference>
<dbReference type="SMR" id="C5GVJ9"/>
<dbReference type="STRING" id="559297.C5GVJ9"/>
<dbReference type="VEuPathDB" id="FungiDB:BDCG_08409"/>
<dbReference type="eggNOG" id="KOG0295">
    <property type="taxonomic scope" value="Eukaryota"/>
</dbReference>
<dbReference type="HOGENOM" id="CLU_000288_57_15_1"/>
<dbReference type="OMA" id="WHVATKE"/>
<dbReference type="GO" id="GO:0005737">
    <property type="term" value="C:cytoplasm"/>
    <property type="evidence" value="ECO:0007669"/>
    <property type="project" value="UniProtKB-UniRule"/>
</dbReference>
<dbReference type="GO" id="GO:0005874">
    <property type="term" value="C:microtubule"/>
    <property type="evidence" value="ECO:0007669"/>
    <property type="project" value="UniProtKB-KW"/>
</dbReference>
<dbReference type="GO" id="GO:0005875">
    <property type="term" value="C:microtubule associated complex"/>
    <property type="evidence" value="ECO:0007669"/>
    <property type="project" value="UniProtKB-UniRule"/>
</dbReference>
<dbReference type="GO" id="GO:0000922">
    <property type="term" value="C:spindle pole"/>
    <property type="evidence" value="ECO:0007669"/>
    <property type="project" value="UniProtKB-SubCell"/>
</dbReference>
<dbReference type="GO" id="GO:0070840">
    <property type="term" value="F:dynein complex binding"/>
    <property type="evidence" value="ECO:0007669"/>
    <property type="project" value="UniProtKB-UniRule"/>
</dbReference>
<dbReference type="GO" id="GO:0051301">
    <property type="term" value="P:cell division"/>
    <property type="evidence" value="ECO:0007669"/>
    <property type="project" value="UniProtKB-KW"/>
</dbReference>
<dbReference type="GO" id="GO:0000132">
    <property type="term" value="P:establishment of mitotic spindle orientation"/>
    <property type="evidence" value="ECO:0007669"/>
    <property type="project" value="UniProtKB-UniRule"/>
</dbReference>
<dbReference type="GO" id="GO:0051012">
    <property type="term" value="P:microtubule sliding"/>
    <property type="evidence" value="ECO:0007669"/>
    <property type="project" value="UniProtKB-UniRule"/>
</dbReference>
<dbReference type="CDD" id="cd00200">
    <property type="entry name" value="WD40"/>
    <property type="match status" value="1"/>
</dbReference>
<dbReference type="FunFam" id="1.20.960.30:FF:000002">
    <property type="entry name" value="Platelet-activating factor acetylhydrolase ib"/>
    <property type="match status" value="1"/>
</dbReference>
<dbReference type="Gene3D" id="1.20.960.30">
    <property type="match status" value="1"/>
</dbReference>
<dbReference type="Gene3D" id="2.130.10.10">
    <property type="entry name" value="YVTN repeat-like/Quinoprotein amine dehydrogenase"/>
    <property type="match status" value="1"/>
</dbReference>
<dbReference type="HAMAP" id="MF_03141">
    <property type="entry name" value="lis1"/>
    <property type="match status" value="1"/>
</dbReference>
<dbReference type="InterPro" id="IPR017252">
    <property type="entry name" value="Dynein_regulator_LIS1"/>
</dbReference>
<dbReference type="InterPro" id="IPR020472">
    <property type="entry name" value="G-protein_beta_WD-40_rep"/>
</dbReference>
<dbReference type="InterPro" id="IPR037190">
    <property type="entry name" value="LIS1_N"/>
</dbReference>
<dbReference type="InterPro" id="IPR006594">
    <property type="entry name" value="LisH"/>
</dbReference>
<dbReference type="InterPro" id="IPR056795">
    <property type="entry name" value="PAC1-like_LisH-like_dom"/>
</dbReference>
<dbReference type="InterPro" id="IPR015943">
    <property type="entry name" value="WD40/YVTN_repeat-like_dom_sf"/>
</dbReference>
<dbReference type="InterPro" id="IPR019775">
    <property type="entry name" value="WD40_repeat_CS"/>
</dbReference>
<dbReference type="InterPro" id="IPR036322">
    <property type="entry name" value="WD40_repeat_dom_sf"/>
</dbReference>
<dbReference type="InterPro" id="IPR001680">
    <property type="entry name" value="WD40_rpt"/>
</dbReference>
<dbReference type="PANTHER" id="PTHR19848:SF8">
    <property type="entry name" value="F-BOX AND WD REPEAT DOMAIN CONTAINING 7"/>
    <property type="match status" value="1"/>
</dbReference>
<dbReference type="PANTHER" id="PTHR19848">
    <property type="entry name" value="WD40 REPEAT PROTEIN"/>
    <property type="match status" value="1"/>
</dbReference>
<dbReference type="Pfam" id="PF24951">
    <property type="entry name" value="LisH_PAC1"/>
    <property type="match status" value="1"/>
</dbReference>
<dbReference type="Pfam" id="PF00400">
    <property type="entry name" value="WD40"/>
    <property type="match status" value="6"/>
</dbReference>
<dbReference type="PIRSF" id="PIRSF037647">
    <property type="entry name" value="Dynein_regulator_Lis1"/>
    <property type="match status" value="1"/>
</dbReference>
<dbReference type="PRINTS" id="PR00320">
    <property type="entry name" value="GPROTEINBRPT"/>
</dbReference>
<dbReference type="SMART" id="SM00320">
    <property type="entry name" value="WD40"/>
    <property type="match status" value="7"/>
</dbReference>
<dbReference type="SUPFAM" id="SSF109925">
    <property type="entry name" value="Lissencephaly-1 protein (Lis-1, PAF-AH alpha) N-terminal domain"/>
    <property type="match status" value="1"/>
</dbReference>
<dbReference type="SUPFAM" id="SSF50978">
    <property type="entry name" value="WD40 repeat-like"/>
    <property type="match status" value="1"/>
</dbReference>
<dbReference type="PROSITE" id="PS50896">
    <property type="entry name" value="LISH"/>
    <property type="match status" value="1"/>
</dbReference>
<dbReference type="PROSITE" id="PS00678">
    <property type="entry name" value="WD_REPEATS_1"/>
    <property type="match status" value="3"/>
</dbReference>
<dbReference type="PROSITE" id="PS50082">
    <property type="entry name" value="WD_REPEATS_2"/>
    <property type="match status" value="6"/>
</dbReference>
<dbReference type="PROSITE" id="PS50294">
    <property type="entry name" value="WD_REPEATS_REGION"/>
    <property type="match status" value="1"/>
</dbReference>
<organism>
    <name type="scientific">Ajellomyces dermatitidis (strain ER-3 / ATCC MYA-2586)</name>
    <name type="common">Blastomyces dermatitidis</name>
    <dbReference type="NCBI Taxonomy" id="559297"/>
    <lineage>
        <taxon>Eukaryota</taxon>
        <taxon>Fungi</taxon>
        <taxon>Dikarya</taxon>
        <taxon>Ascomycota</taxon>
        <taxon>Pezizomycotina</taxon>
        <taxon>Eurotiomycetes</taxon>
        <taxon>Eurotiomycetidae</taxon>
        <taxon>Onygenales</taxon>
        <taxon>Ajellomycetaceae</taxon>
        <taxon>Blastomyces</taxon>
    </lineage>
</organism>
<comment type="function">
    <text evidence="1">Positively regulates the activity of the minus-end directed microtubule motor protein dynein. May enhance dynein-mediated microtubule sliding by targeting dynein to the microtubule plus end. Required for nuclear migration during vegetative growth as well as development. Required for retrograde early endosome (EE) transport from the hyphal tip. Required for localization of dynein to the mitotic spindle poles. Recruits additional proteins to the dynein complex at SPBs.</text>
</comment>
<comment type="subunit">
    <text evidence="1">Self-associates. Interacts with NDL1 and dynein.</text>
</comment>
<comment type="subcellular location">
    <subcellularLocation>
        <location evidence="1">Cytoplasm</location>
        <location evidence="1">Cytoskeleton</location>
    </subcellularLocation>
    <subcellularLocation>
        <location evidence="1">Cytoplasm</location>
        <location evidence="1">Cytoskeleton</location>
        <location evidence="1">Spindle pole</location>
    </subcellularLocation>
    <text evidence="1">Localizes to the plus ends of microtubules at the hyphal tip and the mitotic spindle poles.</text>
</comment>
<comment type="domain">
    <text evidence="1">Dimerization mediated by the LisH domain may be required to activate dynein.</text>
</comment>
<comment type="similarity">
    <text evidence="1">Belongs to the WD repeat LIS1/nudF family.</text>
</comment>
<proteinExistence type="inferred from homology"/>